<comment type="function">
    <text evidence="1">Stimulates insulin release from beta cells at a concentration of 1 nM and release of glucagon-like peptide 1 (GLP-1) from enteroendocrine cells in vitro. Reduces secretion of interferon gamma from peritoneal cells in a mouse model. Has no inhibitory activity against Gram-positive bacterium B.megaterium Bm11 or Gram-negative bacterium E.coli ATCC 25922 at concentrations of up to 100 uM. Has no hemolytic activity against mouse erythrocytes.</text>
</comment>
<comment type="subcellular location">
    <subcellularLocation>
        <location evidence="1">Secreted</location>
    </subcellularLocation>
</comment>
<comment type="tissue specificity">
    <text evidence="4">Expressed by the skin glands.</text>
</comment>
<comment type="mass spectrometry" mass="1438.7" method="MALDI" evidence="1"/>
<name>TIN1O_HOPOC</name>
<evidence type="ECO:0000269" key="1">
    <source>
    </source>
</evidence>
<evidence type="ECO:0000303" key="2">
    <source>
    </source>
</evidence>
<evidence type="ECO:0000305" key="3"/>
<evidence type="ECO:0000305" key="4">
    <source>
    </source>
</evidence>
<sequence length="12" mass="1441">RICTPIPFPMCY</sequence>
<dbReference type="GO" id="GO:0005576">
    <property type="term" value="C:extracellular region"/>
    <property type="evidence" value="ECO:0007669"/>
    <property type="project" value="UniProtKB-SubCell"/>
</dbReference>
<dbReference type="GO" id="GO:0006952">
    <property type="term" value="P:defense response"/>
    <property type="evidence" value="ECO:0007669"/>
    <property type="project" value="UniProtKB-KW"/>
</dbReference>
<organism evidence="2">
    <name type="scientific">Hoplobatrachus occipitalis</name>
    <name type="common">African groove-crowned bullfrog</name>
    <name type="synonym">Rana occipitalis</name>
    <dbReference type="NCBI Taxonomy" id="127645"/>
    <lineage>
        <taxon>Eukaryota</taxon>
        <taxon>Metazoa</taxon>
        <taxon>Chordata</taxon>
        <taxon>Craniata</taxon>
        <taxon>Vertebrata</taxon>
        <taxon>Euteleostomi</taxon>
        <taxon>Amphibia</taxon>
        <taxon>Batrachia</taxon>
        <taxon>Anura</taxon>
        <taxon>Neobatrachia</taxon>
        <taxon>Ranoidea</taxon>
        <taxon>Dicroglossidae</taxon>
        <taxon>Dicroglossinae</taxon>
        <taxon>Hoplobatrachus</taxon>
    </lineage>
</organism>
<protein>
    <recommendedName>
        <fullName evidence="2">Tigerinin-1O</fullName>
    </recommendedName>
</protein>
<accession>C0HL41</accession>
<feature type="peptide" id="PRO_0000442175" description="Tigerinin-1O" evidence="1">
    <location>
        <begin position="1"/>
        <end position="12"/>
    </location>
</feature>
<feature type="disulfide bond" evidence="1">
    <location>
        <begin position="3"/>
        <end position="11"/>
    </location>
</feature>
<proteinExistence type="evidence at protein level"/>
<keyword id="KW-0878">Amphibian defense peptide</keyword>
<keyword id="KW-0903">Direct protein sequencing</keyword>
<keyword id="KW-1015">Disulfide bond</keyword>
<keyword id="KW-0964">Secreted</keyword>
<reference evidence="3" key="1">
    <citation type="journal article" date="2016" name="J. Nat. Prod.">
        <title>Purification, Conformational Analysis, and Properties of a Family of Tigerinin Peptides from Skin Secretions of the Crowned Bullfrog Hoplobatrachus occipitalis.</title>
        <authorList>
            <person name="McLaughlin C.M."/>
            <person name="Lampis S."/>
            <person name="Mechkarska M."/>
            <person name="Coquet L."/>
            <person name="Jouenne T."/>
            <person name="King J.D."/>
            <person name="Mangoni M.L."/>
            <person name="Lukic M.L."/>
            <person name="Scorciapino M.A."/>
            <person name="Conlon J.M."/>
        </authorList>
    </citation>
    <scope>PROTEIN SEQUENCE</scope>
    <scope>FUNCTION</scope>
    <scope>SUBCELLULAR LOCATION</scope>
    <scope>MASS SPECTROMETRY</scope>
    <scope>DISULFIDE BOND</scope>
    <source>
        <tissue evidence="2">Skin secretion</tissue>
    </source>
</reference>